<feature type="chain" id="PRO_0000232816" description="Phenylalanine--tRNA ligase beta subunit">
    <location>
        <begin position="1"/>
        <end position="822"/>
    </location>
</feature>
<feature type="domain" description="tRNA-binding" evidence="1">
    <location>
        <begin position="44"/>
        <end position="162"/>
    </location>
</feature>
<feature type="domain" description="B5" evidence="1">
    <location>
        <begin position="430"/>
        <end position="513"/>
    </location>
</feature>
<feature type="domain" description="FDX-ACB" evidence="1">
    <location>
        <begin position="730"/>
        <end position="822"/>
    </location>
</feature>
<feature type="region of interest" description="Disordered" evidence="2">
    <location>
        <begin position="201"/>
        <end position="224"/>
    </location>
</feature>
<feature type="binding site" evidence="1">
    <location>
        <position position="491"/>
    </location>
    <ligand>
        <name>Mg(2+)</name>
        <dbReference type="ChEBI" id="CHEBI:18420"/>
        <note>shared with alpha subunit</note>
    </ligand>
</feature>
<feature type="binding site" evidence="1">
    <location>
        <position position="497"/>
    </location>
    <ligand>
        <name>Mg(2+)</name>
        <dbReference type="ChEBI" id="CHEBI:18420"/>
        <note>shared with alpha subunit</note>
    </ligand>
</feature>
<feature type="binding site" evidence="1">
    <location>
        <position position="501"/>
    </location>
    <ligand>
        <name>Mg(2+)</name>
        <dbReference type="ChEBI" id="CHEBI:18420"/>
        <note>shared with alpha subunit</note>
    </ligand>
</feature>
<dbReference type="EC" id="6.1.1.20" evidence="1"/>
<dbReference type="EMBL" id="AP006628">
    <property type="protein sequence ID" value="BAD04683.1"/>
    <property type="status" value="ALT_INIT"/>
    <property type="molecule type" value="Genomic_DNA"/>
</dbReference>
<dbReference type="SMR" id="Q6YPX7"/>
<dbReference type="STRING" id="262768.PAM_598"/>
<dbReference type="KEGG" id="poy:PAM_598"/>
<dbReference type="eggNOG" id="COG0072">
    <property type="taxonomic scope" value="Bacteria"/>
</dbReference>
<dbReference type="HOGENOM" id="CLU_016891_0_0_14"/>
<dbReference type="Proteomes" id="UP000002523">
    <property type="component" value="Chromosome"/>
</dbReference>
<dbReference type="GO" id="GO:0009328">
    <property type="term" value="C:phenylalanine-tRNA ligase complex"/>
    <property type="evidence" value="ECO:0007669"/>
    <property type="project" value="TreeGrafter"/>
</dbReference>
<dbReference type="GO" id="GO:0005524">
    <property type="term" value="F:ATP binding"/>
    <property type="evidence" value="ECO:0007669"/>
    <property type="project" value="UniProtKB-UniRule"/>
</dbReference>
<dbReference type="GO" id="GO:0000287">
    <property type="term" value="F:magnesium ion binding"/>
    <property type="evidence" value="ECO:0007669"/>
    <property type="project" value="UniProtKB-UniRule"/>
</dbReference>
<dbReference type="GO" id="GO:0004826">
    <property type="term" value="F:phenylalanine-tRNA ligase activity"/>
    <property type="evidence" value="ECO:0007669"/>
    <property type="project" value="UniProtKB-UniRule"/>
</dbReference>
<dbReference type="GO" id="GO:0000049">
    <property type="term" value="F:tRNA binding"/>
    <property type="evidence" value="ECO:0007669"/>
    <property type="project" value="UniProtKB-KW"/>
</dbReference>
<dbReference type="GO" id="GO:0006432">
    <property type="term" value="P:phenylalanyl-tRNA aminoacylation"/>
    <property type="evidence" value="ECO:0007669"/>
    <property type="project" value="UniProtKB-UniRule"/>
</dbReference>
<dbReference type="CDD" id="cd00769">
    <property type="entry name" value="PheRS_beta_core"/>
    <property type="match status" value="1"/>
</dbReference>
<dbReference type="CDD" id="cd02796">
    <property type="entry name" value="tRNA_bind_bactPheRS"/>
    <property type="match status" value="1"/>
</dbReference>
<dbReference type="Gene3D" id="3.30.56.10">
    <property type="match status" value="2"/>
</dbReference>
<dbReference type="Gene3D" id="3.30.930.10">
    <property type="entry name" value="Bira Bifunctional Protein, Domain 2"/>
    <property type="match status" value="1"/>
</dbReference>
<dbReference type="Gene3D" id="3.30.70.380">
    <property type="entry name" value="Ferrodoxin-fold anticodon-binding domain"/>
    <property type="match status" value="1"/>
</dbReference>
<dbReference type="Gene3D" id="2.40.50.140">
    <property type="entry name" value="Nucleic acid-binding proteins"/>
    <property type="match status" value="1"/>
</dbReference>
<dbReference type="Gene3D" id="3.50.40.10">
    <property type="entry name" value="Phenylalanyl-trna Synthetase, Chain B, domain 3"/>
    <property type="match status" value="1"/>
</dbReference>
<dbReference type="HAMAP" id="MF_00283">
    <property type="entry name" value="Phe_tRNA_synth_beta1"/>
    <property type="match status" value="1"/>
</dbReference>
<dbReference type="InterPro" id="IPR045864">
    <property type="entry name" value="aa-tRNA-synth_II/BPL/LPL"/>
</dbReference>
<dbReference type="InterPro" id="IPR005146">
    <property type="entry name" value="B3/B4_tRNA-bd"/>
</dbReference>
<dbReference type="InterPro" id="IPR009061">
    <property type="entry name" value="DNA-bd_dom_put_sf"/>
</dbReference>
<dbReference type="InterPro" id="IPR005121">
    <property type="entry name" value="Fdx_antiC-bd"/>
</dbReference>
<dbReference type="InterPro" id="IPR036690">
    <property type="entry name" value="Fdx_antiC-bd_sf"/>
</dbReference>
<dbReference type="InterPro" id="IPR012340">
    <property type="entry name" value="NA-bd_OB-fold"/>
</dbReference>
<dbReference type="InterPro" id="IPR045060">
    <property type="entry name" value="Phe-tRNA-ligase_IIc_bsu"/>
</dbReference>
<dbReference type="InterPro" id="IPR004532">
    <property type="entry name" value="Phe-tRNA-ligase_IIc_bsu_bact"/>
</dbReference>
<dbReference type="InterPro" id="IPR020825">
    <property type="entry name" value="Phe-tRNA_synthase-like_B3/B4"/>
</dbReference>
<dbReference type="InterPro" id="IPR041616">
    <property type="entry name" value="PheRS_beta_core"/>
</dbReference>
<dbReference type="InterPro" id="IPR002547">
    <property type="entry name" value="tRNA-bd_dom"/>
</dbReference>
<dbReference type="InterPro" id="IPR033714">
    <property type="entry name" value="tRNA_bind_bactPheRS"/>
</dbReference>
<dbReference type="InterPro" id="IPR005147">
    <property type="entry name" value="tRNA_synthase_B5-dom"/>
</dbReference>
<dbReference type="NCBIfam" id="TIGR00472">
    <property type="entry name" value="pheT_bact"/>
    <property type="match status" value="1"/>
</dbReference>
<dbReference type="PANTHER" id="PTHR10947:SF0">
    <property type="entry name" value="PHENYLALANINE--TRNA LIGASE BETA SUBUNIT"/>
    <property type="match status" value="1"/>
</dbReference>
<dbReference type="PANTHER" id="PTHR10947">
    <property type="entry name" value="PHENYLALANYL-TRNA SYNTHETASE BETA CHAIN AND LEUCINE-RICH REPEAT-CONTAINING PROTEIN 47"/>
    <property type="match status" value="1"/>
</dbReference>
<dbReference type="Pfam" id="PF03483">
    <property type="entry name" value="B3_4"/>
    <property type="match status" value="1"/>
</dbReference>
<dbReference type="Pfam" id="PF03484">
    <property type="entry name" value="B5"/>
    <property type="match status" value="1"/>
</dbReference>
<dbReference type="Pfam" id="PF03147">
    <property type="entry name" value="FDX-ACB"/>
    <property type="match status" value="1"/>
</dbReference>
<dbReference type="Pfam" id="PF01588">
    <property type="entry name" value="tRNA_bind"/>
    <property type="match status" value="1"/>
</dbReference>
<dbReference type="Pfam" id="PF17759">
    <property type="entry name" value="tRNA_synthFbeta"/>
    <property type="match status" value="1"/>
</dbReference>
<dbReference type="SMART" id="SM00873">
    <property type="entry name" value="B3_4"/>
    <property type="match status" value="1"/>
</dbReference>
<dbReference type="SMART" id="SM00874">
    <property type="entry name" value="B5"/>
    <property type="match status" value="1"/>
</dbReference>
<dbReference type="SMART" id="SM00896">
    <property type="entry name" value="FDX-ACB"/>
    <property type="match status" value="1"/>
</dbReference>
<dbReference type="SUPFAM" id="SSF54991">
    <property type="entry name" value="Anticodon-binding domain of PheRS"/>
    <property type="match status" value="1"/>
</dbReference>
<dbReference type="SUPFAM" id="SSF55681">
    <property type="entry name" value="Class II aaRS and biotin synthetases"/>
    <property type="match status" value="1"/>
</dbReference>
<dbReference type="SUPFAM" id="SSF50249">
    <property type="entry name" value="Nucleic acid-binding proteins"/>
    <property type="match status" value="1"/>
</dbReference>
<dbReference type="SUPFAM" id="SSF56037">
    <property type="entry name" value="PheT/TilS domain"/>
    <property type="match status" value="1"/>
</dbReference>
<dbReference type="SUPFAM" id="SSF46955">
    <property type="entry name" value="Putative DNA-binding domain"/>
    <property type="match status" value="1"/>
</dbReference>
<dbReference type="PROSITE" id="PS51483">
    <property type="entry name" value="B5"/>
    <property type="match status" value="1"/>
</dbReference>
<dbReference type="PROSITE" id="PS51447">
    <property type="entry name" value="FDX_ACB"/>
    <property type="match status" value="1"/>
</dbReference>
<dbReference type="PROSITE" id="PS50886">
    <property type="entry name" value="TRBD"/>
    <property type="match status" value="1"/>
</dbReference>
<organism>
    <name type="scientific">Onion yellows phytoplasma (strain OY-M)</name>
    <dbReference type="NCBI Taxonomy" id="262768"/>
    <lineage>
        <taxon>Bacteria</taxon>
        <taxon>Bacillati</taxon>
        <taxon>Mycoplasmatota</taxon>
        <taxon>Mollicutes</taxon>
        <taxon>Acholeplasmatales</taxon>
        <taxon>Acholeplasmataceae</taxon>
        <taxon>Candidatus Phytoplasma</taxon>
        <taxon>16SrI (Aster yellows group)</taxon>
    </lineage>
</organism>
<comment type="catalytic activity">
    <reaction evidence="1">
        <text>tRNA(Phe) + L-phenylalanine + ATP = L-phenylalanyl-tRNA(Phe) + AMP + diphosphate + H(+)</text>
        <dbReference type="Rhea" id="RHEA:19413"/>
        <dbReference type="Rhea" id="RHEA-COMP:9668"/>
        <dbReference type="Rhea" id="RHEA-COMP:9699"/>
        <dbReference type="ChEBI" id="CHEBI:15378"/>
        <dbReference type="ChEBI" id="CHEBI:30616"/>
        <dbReference type="ChEBI" id="CHEBI:33019"/>
        <dbReference type="ChEBI" id="CHEBI:58095"/>
        <dbReference type="ChEBI" id="CHEBI:78442"/>
        <dbReference type="ChEBI" id="CHEBI:78531"/>
        <dbReference type="ChEBI" id="CHEBI:456215"/>
        <dbReference type="EC" id="6.1.1.20"/>
    </reaction>
</comment>
<comment type="cofactor">
    <cofactor evidence="1">
        <name>Mg(2+)</name>
        <dbReference type="ChEBI" id="CHEBI:18420"/>
    </cofactor>
    <text evidence="1">Binds 2 magnesium ions per tetramer.</text>
</comment>
<comment type="subunit">
    <text evidence="1">Tetramer of two alpha and two beta subunits.</text>
</comment>
<comment type="subcellular location">
    <subcellularLocation>
        <location evidence="1">Cytoplasm</location>
    </subcellularLocation>
</comment>
<comment type="similarity">
    <text evidence="1">Belongs to the phenylalanyl-tRNA synthetase beta subunit family. Type 1 subfamily.</text>
</comment>
<comment type="caution">
    <text evidence="3">Lacks the conserved glutamate residue in position 500 that binds magnesium; it is replaced by a serine residue.</text>
</comment>
<comment type="sequence caution" evidence="3">
    <conflict type="erroneous initiation">
        <sequence resource="EMBL-CDS" id="BAD04683"/>
    </conflict>
</comment>
<name>SYFB_ONYPE</name>
<gene>
    <name evidence="1" type="primary">pheT</name>
    <name type="ordered locus">PAM_598</name>
</gene>
<keyword id="KW-0030">Aminoacyl-tRNA synthetase</keyword>
<keyword id="KW-0067">ATP-binding</keyword>
<keyword id="KW-0963">Cytoplasm</keyword>
<keyword id="KW-0436">Ligase</keyword>
<keyword id="KW-0460">Magnesium</keyword>
<keyword id="KW-0479">Metal-binding</keyword>
<keyword id="KW-0547">Nucleotide-binding</keyword>
<keyword id="KW-0648">Protein biosynthesis</keyword>
<keyword id="KW-0694">RNA-binding</keyword>
<keyword id="KW-0820">tRNA-binding</keyword>
<accession>Q6YPX7</accession>
<proteinExistence type="inferred from homology"/>
<reference key="1">
    <citation type="journal article" date="2004" name="Nat. Genet.">
        <title>Reductive evolution suggested from the complete genome sequence of a plant-pathogenic phytoplasma.</title>
        <authorList>
            <person name="Oshima K."/>
            <person name="Kakizawa S."/>
            <person name="Nishigawa H."/>
            <person name="Jung H.-Y."/>
            <person name="Wei W."/>
            <person name="Suzuki S."/>
            <person name="Arashida R."/>
            <person name="Nakata D."/>
            <person name="Miyata S."/>
            <person name="Ugaki M."/>
            <person name="Namba S."/>
        </authorList>
    </citation>
    <scope>NUCLEOTIDE SEQUENCE [LARGE SCALE GENOMIC DNA]</scope>
    <source>
        <strain>OY-M</strain>
    </source>
</reference>
<evidence type="ECO:0000255" key="1">
    <source>
        <dbReference type="HAMAP-Rule" id="MF_00283"/>
    </source>
</evidence>
<evidence type="ECO:0000256" key="2">
    <source>
        <dbReference type="SAM" id="MobiDB-lite"/>
    </source>
</evidence>
<evidence type="ECO:0000305" key="3"/>
<protein>
    <recommendedName>
        <fullName evidence="1">Phenylalanine--tRNA ligase beta subunit</fullName>
        <ecNumber evidence="1">6.1.1.20</ecNumber>
    </recommendedName>
    <alternativeName>
        <fullName evidence="1">Phenylalanyl-tRNA synthetase beta subunit</fullName>
        <shortName evidence="1">PheRS</shortName>
    </alternativeName>
</protein>
<sequence>MQGTPPTMKIIENILKNHFSQPLSQNISALTNNYITEVQNFFPLSKNTNLVVGQILNFQKIQGSQKLNLVEVNTGTKVVKIVCGASNLQNGKKVIVASEGSFLEGINATLKNKKIYGVFSEGMLCALEELGISTKFLTPQEQEGIYLFDDPNDQIALGSNALIPLGLDCFILELGLTPNRVGDLLSHLGFAKDLKAVLSSQSSNNNQETKSTNYKTKNSEDQTNPDFFANLPQSPLKVQIENDSCYEYNACILENIKIKPSPLWLRNALLQSGINPINNVVDITNLILIEYGIPLHAFDSENIKQIKVRKALPQENITTLNQNDFVLDENDLVITDGKKAIALAGIVGLLESSIKPTTTKIILEAAYFSPQTIAQTCQKLKTKTESSLRFERGIDQSLIPLAFQKACQLLVTLADGKITYQPVITKQKNRTNPTISLNLDFVTRKIGVSLCPTQIKNWLLNLDYQIHTSKHLGPQNKNEQLNLQAPLRRYDVKIKEDVISDLTRLYGCHKLPPQTIQIPTQGKLTLKQKNIRELRKLLVNLGFYETITYSLISSEMFEAFTPQKPFIKIMNPLSQDKMILRQSLLSSLVEVLSYQHKRQTFDTAFFEIGKTYFPNQETLSLAFALNGHFLNSLWHKQDVSSSFFVTKGILEKISAFLGITLTYQKTQQHSNFHPGMQANLLFNNQIIGVIGKTHPQLNTKYHLKESFLCELFLTDEILNTTKTFTFQPIPKFPTVIRDLAFLVDTKYSFYQIEQTIKQTTPFDLIKCELFDVYQIPKTKEKHSLALRLFFHNLDKNLEKQDVEHCMEKITSNLIKHFHIEIR</sequence>